<organism>
    <name type="scientific">Klebsiella pneumoniae subsp. pneumoniae (strain ATCC 700721 / MGH 78578)</name>
    <dbReference type="NCBI Taxonomy" id="272620"/>
    <lineage>
        <taxon>Bacteria</taxon>
        <taxon>Pseudomonadati</taxon>
        <taxon>Pseudomonadota</taxon>
        <taxon>Gammaproteobacteria</taxon>
        <taxon>Enterobacterales</taxon>
        <taxon>Enterobacteriaceae</taxon>
        <taxon>Klebsiella/Raoultella group</taxon>
        <taxon>Klebsiella</taxon>
        <taxon>Klebsiella pneumoniae complex</taxon>
    </lineage>
</organism>
<sequence>MPIQVLPPQLANQIAAGEVVERPASVVKELVENSLDAGATRIDIDIERGGAKLIRIRDNGSGIKKDELALALARHATSKIASLDDLEAIISLGFRGEALASISSVARLTLTSRTAEQQEAWQAYAEGRDQAVTVKPAAHPVGTTLEVLDLFYNTPARRKFMRTEKTEFGHIDEVVRRIALARFDVTINLSHNGKVMRQYRAVAQDGQRERRLGTICGAAFLEHALAIEWQHGDLTLRGWVADPLHTTPALAEIQYCYVNGRMMRDRLINHAIRQACEDKLGADQQPAFVLYLEIDPHQVDVNVHPAKHEVRFHQSRLVHDFIYQGVLSVLQQQLDAPLAEKDDPPAPRPMPENRIAAGGNQFARPAEAREPATRFSITPSREPAASSGKPGGASWPHAQPGYQKQQGALYRQLLDTPTSPKPALQPPAAAELAGHSQSFGRVLTIVGGDCALLEREGGLALLSLTVAERWLRQAQLTPGAEAVCAQPLLIPLRLKVTEGEKQALAAAQPALAQLGIDVHTDALHVTVRAVPLPLRQQNLQILIPELIGYLAQQNAFDVGNIAQWMARNLTSEQTSWNMAQAIALLADVERLCPQLVRTPPGGLLQPVDLHSAMNALKDE</sequence>
<name>MUTL_KLEP7</name>
<keyword id="KW-0227">DNA damage</keyword>
<keyword id="KW-0234">DNA repair</keyword>
<gene>
    <name evidence="1" type="primary">mutL</name>
    <name type="ordered locus">KPN78578_44950</name>
    <name type="ORF">KPN_04568</name>
</gene>
<evidence type="ECO:0000255" key="1">
    <source>
        <dbReference type="HAMAP-Rule" id="MF_00149"/>
    </source>
</evidence>
<evidence type="ECO:0000256" key="2">
    <source>
        <dbReference type="SAM" id="MobiDB-lite"/>
    </source>
</evidence>
<accession>A6TH85</accession>
<reference key="1">
    <citation type="submission" date="2006-09" db="EMBL/GenBank/DDBJ databases">
        <authorList>
            <consortium name="The Klebsiella pneumonia Genome Sequencing Project"/>
            <person name="McClelland M."/>
            <person name="Sanderson E.K."/>
            <person name="Spieth J."/>
            <person name="Clifton W.S."/>
            <person name="Latreille P."/>
            <person name="Sabo A."/>
            <person name="Pepin K."/>
            <person name="Bhonagiri V."/>
            <person name="Porwollik S."/>
            <person name="Ali J."/>
            <person name="Wilson R.K."/>
        </authorList>
    </citation>
    <scope>NUCLEOTIDE SEQUENCE [LARGE SCALE GENOMIC DNA]</scope>
    <source>
        <strain>ATCC 700721 / MGH 78578</strain>
    </source>
</reference>
<proteinExistence type="inferred from homology"/>
<protein>
    <recommendedName>
        <fullName evidence="1">DNA mismatch repair protein MutL</fullName>
    </recommendedName>
</protein>
<feature type="chain" id="PRO_1000010026" description="DNA mismatch repair protein MutL">
    <location>
        <begin position="1"/>
        <end position="619"/>
    </location>
</feature>
<feature type="region of interest" description="Disordered" evidence="2">
    <location>
        <begin position="339"/>
        <end position="400"/>
    </location>
</feature>
<comment type="function">
    <text evidence="1">This protein is involved in the repair of mismatches in DNA. It is required for dam-dependent methyl-directed DNA mismatch repair. May act as a 'molecular matchmaker', a protein that promotes the formation of a stable complex between two or more DNA-binding proteins in an ATP-dependent manner without itself being part of a final effector complex.</text>
</comment>
<comment type="similarity">
    <text evidence="1">Belongs to the DNA mismatch repair MutL/HexB family.</text>
</comment>
<dbReference type="EMBL" id="CP000647">
    <property type="protein sequence ID" value="ABR79919.1"/>
    <property type="molecule type" value="Genomic_DNA"/>
</dbReference>
<dbReference type="RefSeq" id="WP_004222064.1">
    <property type="nucleotide sequence ID" value="NC_009648.1"/>
</dbReference>
<dbReference type="SMR" id="A6TH85"/>
<dbReference type="STRING" id="272620.KPN_04568"/>
<dbReference type="PaxDb" id="272620-KPN_04568"/>
<dbReference type="EnsemblBacteria" id="ABR79919">
    <property type="protein sequence ID" value="ABR79919"/>
    <property type="gene ID" value="KPN_04568"/>
</dbReference>
<dbReference type="KEGG" id="kpn:KPN_04568"/>
<dbReference type="HOGENOM" id="CLU_004131_5_1_6"/>
<dbReference type="Proteomes" id="UP000000265">
    <property type="component" value="Chromosome"/>
</dbReference>
<dbReference type="GO" id="GO:0032300">
    <property type="term" value="C:mismatch repair complex"/>
    <property type="evidence" value="ECO:0007669"/>
    <property type="project" value="InterPro"/>
</dbReference>
<dbReference type="GO" id="GO:0005524">
    <property type="term" value="F:ATP binding"/>
    <property type="evidence" value="ECO:0007669"/>
    <property type="project" value="InterPro"/>
</dbReference>
<dbReference type="GO" id="GO:0016887">
    <property type="term" value="F:ATP hydrolysis activity"/>
    <property type="evidence" value="ECO:0007669"/>
    <property type="project" value="InterPro"/>
</dbReference>
<dbReference type="GO" id="GO:0140664">
    <property type="term" value="F:ATP-dependent DNA damage sensor activity"/>
    <property type="evidence" value="ECO:0007669"/>
    <property type="project" value="InterPro"/>
</dbReference>
<dbReference type="GO" id="GO:0030983">
    <property type="term" value="F:mismatched DNA binding"/>
    <property type="evidence" value="ECO:0007669"/>
    <property type="project" value="InterPro"/>
</dbReference>
<dbReference type="GO" id="GO:0006298">
    <property type="term" value="P:mismatch repair"/>
    <property type="evidence" value="ECO:0007669"/>
    <property type="project" value="UniProtKB-UniRule"/>
</dbReference>
<dbReference type="CDD" id="cd16926">
    <property type="entry name" value="HATPase_MutL-MLH-PMS-like"/>
    <property type="match status" value="1"/>
</dbReference>
<dbReference type="CDD" id="cd03482">
    <property type="entry name" value="MutL_Trans_MutL"/>
    <property type="match status" value="1"/>
</dbReference>
<dbReference type="FunFam" id="3.30.230.10:FF:000013">
    <property type="entry name" value="DNA mismatch repair endonuclease MutL"/>
    <property type="match status" value="1"/>
</dbReference>
<dbReference type="FunFam" id="3.30.565.10:FF:000003">
    <property type="entry name" value="DNA mismatch repair endonuclease MutL"/>
    <property type="match status" value="1"/>
</dbReference>
<dbReference type="FunFam" id="3.30.1370.100:FF:000002">
    <property type="entry name" value="DNA mismatch repair protein MutL"/>
    <property type="match status" value="1"/>
</dbReference>
<dbReference type="Gene3D" id="3.30.230.10">
    <property type="match status" value="1"/>
</dbReference>
<dbReference type="Gene3D" id="3.30.565.10">
    <property type="entry name" value="Histidine kinase-like ATPase, C-terminal domain"/>
    <property type="match status" value="1"/>
</dbReference>
<dbReference type="Gene3D" id="3.30.1540.20">
    <property type="entry name" value="MutL, C-terminal domain, dimerisation subdomain"/>
    <property type="match status" value="1"/>
</dbReference>
<dbReference type="Gene3D" id="3.30.1370.100">
    <property type="entry name" value="MutL, C-terminal domain, regulatory subdomain"/>
    <property type="match status" value="1"/>
</dbReference>
<dbReference type="HAMAP" id="MF_00149">
    <property type="entry name" value="DNA_mis_repair"/>
    <property type="match status" value="1"/>
</dbReference>
<dbReference type="InterPro" id="IPR014762">
    <property type="entry name" value="DNA_mismatch_repair_CS"/>
</dbReference>
<dbReference type="InterPro" id="IPR020667">
    <property type="entry name" value="DNA_mismatch_repair_MutL"/>
</dbReference>
<dbReference type="InterPro" id="IPR013507">
    <property type="entry name" value="DNA_mismatch_S5_2-like"/>
</dbReference>
<dbReference type="InterPro" id="IPR036890">
    <property type="entry name" value="HATPase_C_sf"/>
</dbReference>
<dbReference type="InterPro" id="IPR002099">
    <property type="entry name" value="MutL/Mlh/PMS"/>
</dbReference>
<dbReference type="InterPro" id="IPR038973">
    <property type="entry name" value="MutL/Mlh/Pms-like"/>
</dbReference>
<dbReference type="InterPro" id="IPR014790">
    <property type="entry name" value="MutL_C"/>
</dbReference>
<dbReference type="InterPro" id="IPR042120">
    <property type="entry name" value="MutL_C_dimsub"/>
</dbReference>
<dbReference type="InterPro" id="IPR042121">
    <property type="entry name" value="MutL_C_regsub"/>
</dbReference>
<dbReference type="InterPro" id="IPR037198">
    <property type="entry name" value="MutL_C_sf"/>
</dbReference>
<dbReference type="InterPro" id="IPR020568">
    <property type="entry name" value="Ribosomal_Su5_D2-typ_SF"/>
</dbReference>
<dbReference type="InterPro" id="IPR014721">
    <property type="entry name" value="Ribsml_uS5_D2-typ_fold_subgr"/>
</dbReference>
<dbReference type="NCBIfam" id="TIGR00585">
    <property type="entry name" value="mutl"/>
    <property type="match status" value="1"/>
</dbReference>
<dbReference type="NCBIfam" id="NF000948">
    <property type="entry name" value="PRK00095.1-1"/>
    <property type="match status" value="1"/>
</dbReference>
<dbReference type="PANTHER" id="PTHR10073">
    <property type="entry name" value="DNA MISMATCH REPAIR PROTEIN MLH, PMS, MUTL"/>
    <property type="match status" value="1"/>
</dbReference>
<dbReference type="PANTHER" id="PTHR10073:SF12">
    <property type="entry name" value="DNA MISMATCH REPAIR PROTEIN MLH1"/>
    <property type="match status" value="1"/>
</dbReference>
<dbReference type="Pfam" id="PF01119">
    <property type="entry name" value="DNA_mis_repair"/>
    <property type="match status" value="1"/>
</dbReference>
<dbReference type="Pfam" id="PF13589">
    <property type="entry name" value="HATPase_c_3"/>
    <property type="match status" value="1"/>
</dbReference>
<dbReference type="Pfam" id="PF08676">
    <property type="entry name" value="MutL_C"/>
    <property type="match status" value="1"/>
</dbReference>
<dbReference type="SMART" id="SM01340">
    <property type="entry name" value="DNA_mis_repair"/>
    <property type="match status" value="1"/>
</dbReference>
<dbReference type="SMART" id="SM00853">
    <property type="entry name" value="MutL_C"/>
    <property type="match status" value="1"/>
</dbReference>
<dbReference type="SUPFAM" id="SSF55874">
    <property type="entry name" value="ATPase domain of HSP90 chaperone/DNA topoisomerase II/histidine kinase"/>
    <property type="match status" value="1"/>
</dbReference>
<dbReference type="SUPFAM" id="SSF118116">
    <property type="entry name" value="DNA mismatch repair protein MutL"/>
    <property type="match status" value="1"/>
</dbReference>
<dbReference type="SUPFAM" id="SSF54211">
    <property type="entry name" value="Ribosomal protein S5 domain 2-like"/>
    <property type="match status" value="1"/>
</dbReference>
<dbReference type="PROSITE" id="PS00058">
    <property type="entry name" value="DNA_MISMATCH_REPAIR_1"/>
    <property type="match status" value="1"/>
</dbReference>